<name>CD28_CHICK</name>
<gene>
    <name type="primary">CD28</name>
</gene>
<feature type="signal peptide" evidence="3">
    <location>
        <begin position="1"/>
        <end position="13"/>
    </location>
</feature>
<feature type="chain" id="PRO_0000014656" description="T-cell-specific surface glycoprotein CD28 homolog">
    <location>
        <begin position="14"/>
        <end position="221"/>
    </location>
</feature>
<feature type="topological domain" description="Extracellular" evidence="3">
    <location>
        <begin position="14"/>
        <end position="149"/>
    </location>
</feature>
<feature type="transmembrane region" description="Helical" evidence="3">
    <location>
        <begin position="150"/>
        <end position="174"/>
    </location>
</feature>
<feature type="topological domain" description="Cytoplasmic" evidence="3">
    <location>
        <begin position="175"/>
        <end position="221"/>
    </location>
</feature>
<feature type="domain" description="Ig-like V-type">
    <location>
        <begin position="28"/>
        <end position="137"/>
    </location>
</feature>
<feature type="region of interest" description="Disordered" evidence="4">
    <location>
        <begin position="188"/>
        <end position="209"/>
    </location>
</feature>
<feature type="glycosylation site" description="N-linked (GlcNAc...) asparagine" evidence="3">
    <location>
        <position position="33"/>
    </location>
</feature>
<feature type="glycosylation site" description="N-linked (GlcNAc...) asparagine" evidence="3">
    <location>
        <position position="41"/>
    </location>
</feature>
<feature type="glycosylation site" description="N-linked (GlcNAc...) asparagine" evidence="3">
    <location>
        <position position="45"/>
    </location>
</feature>
<feature type="glycosylation site" description="N-linked (GlcNAc...) asparagine" evidence="3">
    <location>
        <position position="71"/>
    </location>
</feature>
<feature type="glycosylation site" description="N-linked (GlcNAc...) asparagine" evidence="3">
    <location>
        <position position="100"/>
    </location>
</feature>
<feature type="glycosylation site" description="N-linked (GlcNAc...) asparagine" evidence="3">
    <location>
        <position position="128"/>
    </location>
</feature>
<feature type="disulfide bond" evidence="1">
    <location>
        <begin position="40"/>
        <end position="111"/>
    </location>
</feature>
<feature type="disulfide bond" evidence="1">
    <location>
        <begin position="66"/>
        <end position="85"/>
    </location>
</feature>
<protein>
    <recommendedName>
        <fullName>T-cell-specific surface glycoprotein CD28 homolog</fullName>
    </recommendedName>
    <alternativeName>
        <fullName>CHT28</fullName>
    </alternativeName>
</protein>
<evidence type="ECO:0000250" key="1"/>
<evidence type="ECO:0000250" key="2">
    <source>
        <dbReference type="UniProtKB" id="P10747"/>
    </source>
</evidence>
<evidence type="ECO:0000255" key="3"/>
<evidence type="ECO:0000256" key="4">
    <source>
        <dbReference type="SAM" id="MobiDB-lite"/>
    </source>
</evidence>
<accession>P31043</accession>
<keyword id="KW-1015">Disulfide bond</keyword>
<keyword id="KW-0325">Glycoprotein</keyword>
<keyword id="KW-0393">Immunoglobulin domain</keyword>
<keyword id="KW-0472">Membrane</keyword>
<keyword id="KW-0675">Receptor</keyword>
<keyword id="KW-1185">Reference proteome</keyword>
<keyword id="KW-0732">Signal</keyword>
<keyword id="KW-0812">Transmembrane</keyword>
<keyword id="KW-1133">Transmembrane helix</keyword>
<reference key="1">
    <citation type="journal article" date="1994" name="J. Immunol.">
        <title>Monomeric homologue of mammalian CD28 is expressed on chicken T cells.</title>
        <authorList>
            <person name="Young J.R."/>
            <person name="Davison T.F."/>
            <person name="Tregaskes C.A."/>
            <person name="Rennie M.C."/>
            <person name="Vainio O."/>
        </authorList>
    </citation>
    <scope>NUCLEOTIDE SEQUENCE [MRNA]</scope>
    <source>
        <strain>White leghorn</strain>
        <tissue>Spleen</tissue>
    </source>
</reference>
<dbReference type="EMBL" id="X67915">
    <property type="protein sequence ID" value="CAA48114.1"/>
    <property type="molecule type" value="mRNA"/>
</dbReference>
<dbReference type="PIR" id="I50619">
    <property type="entry name" value="S25168"/>
</dbReference>
<dbReference type="RefSeq" id="NP_990642.1">
    <property type="nucleotide sequence ID" value="NM_205311.1"/>
</dbReference>
<dbReference type="SMR" id="P31043"/>
<dbReference type="FunCoup" id="P31043">
    <property type="interactions" value="93"/>
</dbReference>
<dbReference type="STRING" id="9031.ENSGALP00000014099"/>
<dbReference type="GlyCosmos" id="P31043">
    <property type="glycosylation" value="6 sites, No reported glycans"/>
</dbReference>
<dbReference type="GlyGen" id="P31043">
    <property type="glycosylation" value="6 sites"/>
</dbReference>
<dbReference type="PaxDb" id="9031-ENSGALP00000014099"/>
<dbReference type="GeneID" id="396249"/>
<dbReference type="KEGG" id="gga:396249"/>
<dbReference type="CTD" id="940"/>
<dbReference type="VEuPathDB" id="HostDB:geneid_396249"/>
<dbReference type="eggNOG" id="ENOG502SAVP">
    <property type="taxonomic scope" value="Eukaryota"/>
</dbReference>
<dbReference type="HOGENOM" id="CLU_085095_1_0_1"/>
<dbReference type="InParanoid" id="P31043"/>
<dbReference type="OrthoDB" id="8654606at2759"/>
<dbReference type="PhylomeDB" id="P31043"/>
<dbReference type="TreeFam" id="TF335679"/>
<dbReference type="PRO" id="PR:P31043"/>
<dbReference type="Proteomes" id="UP000000539">
    <property type="component" value="Unassembled WGS sequence"/>
</dbReference>
<dbReference type="GO" id="GO:0009897">
    <property type="term" value="C:external side of plasma membrane"/>
    <property type="evidence" value="ECO:0000318"/>
    <property type="project" value="GO_Central"/>
</dbReference>
<dbReference type="GO" id="GO:0005886">
    <property type="term" value="C:plasma membrane"/>
    <property type="evidence" value="ECO:0000250"/>
    <property type="project" value="AgBase"/>
</dbReference>
<dbReference type="GO" id="GO:0006955">
    <property type="term" value="P:immune response"/>
    <property type="evidence" value="ECO:0007669"/>
    <property type="project" value="InterPro"/>
</dbReference>
<dbReference type="GO" id="GO:0042102">
    <property type="term" value="P:positive regulation of T cell proliferation"/>
    <property type="evidence" value="ECO:0000318"/>
    <property type="project" value="GO_Central"/>
</dbReference>
<dbReference type="GO" id="GO:0042110">
    <property type="term" value="P:T cell activation"/>
    <property type="evidence" value="ECO:0000318"/>
    <property type="project" value="GO_Central"/>
</dbReference>
<dbReference type="GO" id="GO:0031295">
    <property type="term" value="P:T cell costimulation"/>
    <property type="evidence" value="ECO:0000318"/>
    <property type="project" value="GO_Central"/>
</dbReference>
<dbReference type="GO" id="GO:0050852">
    <property type="term" value="P:T cell receptor signaling pathway"/>
    <property type="evidence" value="ECO:0000318"/>
    <property type="project" value="GO_Central"/>
</dbReference>
<dbReference type="FunFam" id="2.60.40.10:FF:000874">
    <property type="entry name" value="Inducible T-cell costimulator"/>
    <property type="match status" value="1"/>
</dbReference>
<dbReference type="Gene3D" id="2.60.40.10">
    <property type="entry name" value="Immunoglobulins"/>
    <property type="match status" value="1"/>
</dbReference>
<dbReference type="InterPro" id="IPR008093">
    <property type="entry name" value="CD28"/>
</dbReference>
<dbReference type="InterPro" id="IPR040216">
    <property type="entry name" value="CTLA4/CD28"/>
</dbReference>
<dbReference type="InterPro" id="IPR036179">
    <property type="entry name" value="Ig-like_dom_sf"/>
</dbReference>
<dbReference type="InterPro" id="IPR013783">
    <property type="entry name" value="Ig-like_fold"/>
</dbReference>
<dbReference type="InterPro" id="IPR013106">
    <property type="entry name" value="Ig_V-set"/>
</dbReference>
<dbReference type="PANTHER" id="PTHR11494">
    <property type="entry name" value="CYTOTOXIC T-LYMPHOCYTE PROTEIN"/>
    <property type="match status" value="1"/>
</dbReference>
<dbReference type="PANTHER" id="PTHR11494:SF7">
    <property type="entry name" value="T-CELL-SPECIFIC SURFACE GLYCOPROTEIN CD28"/>
    <property type="match status" value="1"/>
</dbReference>
<dbReference type="Pfam" id="PF07686">
    <property type="entry name" value="V-set"/>
    <property type="match status" value="1"/>
</dbReference>
<dbReference type="PRINTS" id="PR01717">
    <property type="entry name" value="CD28ANTIGEN"/>
</dbReference>
<dbReference type="SUPFAM" id="SSF48726">
    <property type="entry name" value="Immunoglobulin"/>
    <property type="match status" value="1"/>
</dbReference>
<organism>
    <name type="scientific">Gallus gallus</name>
    <name type="common">Chicken</name>
    <dbReference type="NCBI Taxonomy" id="9031"/>
    <lineage>
        <taxon>Eukaryota</taxon>
        <taxon>Metazoa</taxon>
        <taxon>Chordata</taxon>
        <taxon>Craniata</taxon>
        <taxon>Vertebrata</taxon>
        <taxon>Euteleostomi</taxon>
        <taxon>Archelosauria</taxon>
        <taxon>Archosauria</taxon>
        <taxon>Dinosauria</taxon>
        <taxon>Saurischia</taxon>
        <taxon>Theropoda</taxon>
        <taxon>Coelurosauria</taxon>
        <taxon>Aves</taxon>
        <taxon>Neognathae</taxon>
        <taxon>Galloanserae</taxon>
        <taxon>Galliformes</taxon>
        <taxon>Phasianidae</taxon>
        <taxon>Phasianinae</taxon>
        <taxon>Gallus</taxon>
    </lineage>
</organism>
<sequence length="221" mass="25401">MLGILVVLCLIPAADVTENKILVAQRPLLIVANRTATLVCNYTYNGTGKEFRASLHKGTDSAVEVCFISWNMTKINSNSNKEFNCRGIHDKDKVIFNLWNMSASQTDIYFCKIEAMYPPPYVYNEKSNGTVIHVRETPIQTQEPESATSYWVMVAVTGLLGFYSMLITAVFIIYRQKSKRNRYRQSDYMNMTPRHPPHQKNKGYPSYAPTRDYTAYRSWQP</sequence>
<comment type="function">
    <text evidence="2">Possibly involved in T-cell activation.</text>
</comment>
<comment type="subunit">
    <text>Monomer.</text>
</comment>
<comment type="subcellular location">
    <subcellularLocation>
        <location>Membrane</location>
        <topology>Single-pass type I membrane protein</topology>
    </subcellularLocation>
</comment>
<proteinExistence type="evidence at transcript level"/>